<feature type="initiator methionine" description="Removed">
    <location>
        <position position="1"/>
    </location>
</feature>
<feature type="chain" id="PRO_0000053158" description="Hemoglobin subunit beta-1">
    <location>
        <begin position="2"/>
        <end position="147"/>
    </location>
</feature>
<feature type="domain" description="Globin" evidence="1">
    <location>
        <begin position="3"/>
        <end position="147"/>
    </location>
</feature>
<feature type="binding site" description="distal binding residue">
    <location>
        <position position="64"/>
    </location>
    <ligand>
        <name>heme b</name>
        <dbReference type="ChEBI" id="CHEBI:60344"/>
    </ligand>
    <ligandPart>
        <name>Fe</name>
        <dbReference type="ChEBI" id="CHEBI:18248"/>
    </ligandPart>
</feature>
<feature type="binding site" description="proximal binding residue">
    <location>
        <position position="93"/>
    </location>
    <ligand>
        <name>heme b</name>
        <dbReference type="ChEBI" id="CHEBI:60344"/>
    </ligand>
    <ligandPart>
        <name>Fe</name>
        <dbReference type="ChEBI" id="CHEBI:18248"/>
    </ligandPart>
</feature>
<comment type="function">
    <text>Involved in oxygen transport from the lung to the various peripheral tissues.</text>
</comment>
<comment type="subunit">
    <text>Heterotetramer of two alpha chains and two beta chains.</text>
</comment>
<comment type="tissue specificity">
    <text>Red blood cells.</text>
</comment>
<comment type="similarity">
    <text evidence="1">Belongs to the globin family.</text>
</comment>
<proteinExistence type="evidence at transcript level"/>
<accession>P07429</accession>
<accession>Q5I0S7</accession>
<reference key="1">
    <citation type="journal article" date="1986" name="J. Mol. Evol.">
        <title>Globin evolution in the genus Xenopus: comparative analysis of cDNAs coding for adult globin polypeptides of Xenopus borealis and Xenopus tropicalis.</title>
        <authorList>
            <person name="Knoechel W."/>
            <person name="Korge E."/>
            <person name="Basner A."/>
            <person name="Meyerhof W."/>
        </authorList>
    </citation>
    <scope>NUCLEOTIDE SEQUENCE [MRNA]</scope>
</reference>
<reference key="2">
    <citation type="submission" date="2004-12" db="EMBL/GenBank/DDBJ databases">
        <authorList>
            <consortium name="NIH - Xenopus Gene Collection (XGC) project"/>
        </authorList>
    </citation>
    <scope>NUCLEOTIDE SEQUENCE [LARGE SCALE MRNA]</scope>
</reference>
<evidence type="ECO:0000255" key="1">
    <source>
        <dbReference type="PROSITE-ProRule" id="PRU00238"/>
    </source>
</evidence>
<dbReference type="EMBL" id="M32457">
    <property type="protein sequence ID" value="AAA49659.1"/>
    <property type="molecule type" value="mRNA"/>
</dbReference>
<dbReference type="EMBL" id="BC088022">
    <property type="protein sequence ID" value="AAH88022.1"/>
    <property type="molecule type" value="mRNA"/>
</dbReference>
<dbReference type="PIR" id="B25929">
    <property type="entry name" value="B25929"/>
</dbReference>
<dbReference type="RefSeq" id="NP_988859.1">
    <property type="nucleotide sequence ID" value="NM_203528.2"/>
</dbReference>
<dbReference type="SMR" id="P07429"/>
<dbReference type="STRING" id="8364.ENSXETP00000024378"/>
<dbReference type="PaxDb" id="8364-ENSXETP00000054566"/>
<dbReference type="GeneID" id="394453"/>
<dbReference type="KEGG" id="xtr:394453"/>
<dbReference type="AGR" id="Xenbase:XB-GENE-5912896"/>
<dbReference type="CTD" id="3047"/>
<dbReference type="Xenbase" id="XB-GENE-5912896">
    <property type="gene designation" value="hbg1"/>
</dbReference>
<dbReference type="eggNOG" id="KOG3378">
    <property type="taxonomic scope" value="Eukaryota"/>
</dbReference>
<dbReference type="HOGENOM" id="CLU_003827_10_0_1"/>
<dbReference type="InParanoid" id="P07429"/>
<dbReference type="OMA" id="CTIISMA"/>
<dbReference type="OrthoDB" id="9886081at2759"/>
<dbReference type="PhylomeDB" id="P07429"/>
<dbReference type="TreeFam" id="TF333268"/>
<dbReference type="Reactome" id="R-XTR-1237044">
    <property type="pathway name" value="Erythrocytes take up carbon dioxide and release oxygen"/>
</dbReference>
<dbReference type="Reactome" id="R-XTR-1247673">
    <property type="pathway name" value="Erythrocytes take up oxygen and release carbon dioxide"/>
</dbReference>
<dbReference type="Reactome" id="R-XTR-2168880">
    <property type="pathway name" value="Scavenging of heme from plasma"/>
</dbReference>
<dbReference type="Reactome" id="R-XTR-6798695">
    <property type="pathway name" value="Neutrophil degranulation"/>
</dbReference>
<dbReference type="Reactome" id="R-XTR-9707564">
    <property type="pathway name" value="Cytoprotection by HMOX1"/>
</dbReference>
<dbReference type="Reactome" id="R-XTR-9707616">
    <property type="pathway name" value="Heme signaling"/>
</dbReference>
<dbReference type="Proteomes" id="UP000008143">
    <property type="component" value="Chromosome 9"/>
</dbReference>
<dbReference type="Bgee" id="ENSXETG00000025667">
    <property type="expression patterns" value="Expressed in liver and 14 other cell types or tissues"/>
</dbReference>
<dbReference type="GO" id="GO:0005833">
    <property type="term" value="C:hemoglobin complex"/>
    <property type="evidence" value="ECO:0007669"/>
    <property type="project" value="InterPro"/>
</dbReference>
<dbReference type="GO" id="GO:0020037">
    <property type="term" value="F:heme binding"/>
    <property type="evidence" value="ECO:0007669"/>
    <property type="project" value="InterPro"/>
</dbReference>
<dbReference type="GO" id="GO:0046872">
    <property type="term" value="F:metal ion binding"/>
    <property type="evidence" value="ECO:0007669"/>
    <property type="project" value="UniProtKB-KW"/>
</dbReference>
<dbReference type="GO" id="GO:0019825">
    <property type="term" value="F:oxygen binding"/>
    <property type="evidence" value="ECO:0007669"/>
    <property type="project" value="InterPro"/>
</dbReference>
<dbReference type="GO" id="GO:0005344">
    <property type="term" value="F:oxygen carrier activity"/>
    <property type="evidence" value="ECO:0007669"/>
    <property type="project" value="UniProtKB-KW"/>
</dbReference>
<dbReference type="CDD" id="cd08925">
    <property type="entry name" value="Hb-beta-like"/>
    <property type="match status" value="1"/>
</dbReference>
<dbReference type="Gene3D" id="1.10.490.10">
    <property type="entry name" value="Globins"/>
    <property type="match status" value="1"/>
</dbReference>
<dbReference type="InterPro" id="IPR000971">
    <property type="entry name" value="Globin"/>
</dbReference>
<dbReference type="InterPro" id="IPR009050">
    <property type="entry name" value="Globin-like_sf"/>
</dbReference>
<dbReference type="InterPro" id="IPR012292">
    <property type="entry name" value="Globin/Proto"/>
</dbReference>
<dbReference type="InterPro" id="IPR002337">
    <property type="entry name" value="Hemoglobin_b"/>
</dbReference>
<dbReference type="InterPro" id="IPR050056">
    <property type="entry name" value="Hemoglobin_oxygen_transport"/>
</dbReference>
<dbReference type="PANTHER" id="PTHR11442">
    <property type="entry name" value="HEMOGLOBIN FAMILY MEMBER"/>
    <property type="match status" value="1"/>
</dbReference>
<dbReference type="PANTHER" id="PTHR11442:SF100">
    <property type="entry name" value="HEMOGLOBIN SUBUNIT BETA-1"/>
    <property type="match status" value="1"/>
</dbReference>
<dbReference type="Pfam" id="PF00042">
    <property type="entry name" value="Globin"/>
    <property type="match status" value="1"/>
</dbReference>
<dbReference type="PRINTS" id="PR00814">
    <property type="entry name" value="BETAHAEM"/>
</dbReference>
<dbReference type="SUPFAM" id="SSF46458">
    <property type="entry name" value="Globin-like"/>
    <property type="match status" value="1"/>
</dbReference>
<dbReference type="PROSITE" id="PS01033">
    <property type="entry name" value="GLOBIN"/>
    <property type="match status" value="1"/>
</dbReference>
<keyword id="KW-0349">Heme</keyword>
<keyword id="KW-0408">Iron</keyword>
<keyword id="KW-0479">Metal-binding</keyword>
<keyword id="KW-0561">Oxygen transport</keyword>
<keyword id="KW-1185">Reference proteome</keyword>
<keyword id="KW-0813">Transport</keyword>
<protein>
    <recommendedName>
        <fullName>Hemoglobin subunit beta-1</fullName>
    </recommendedName>
    <alternativeName>
        <fullName>Beta-1-globin</fullName>
    </alternativeName>
    <alternativeName>
        <fullName>Hemoglobin beta-1 chain</fullName>
    </alternativeName>
</protein>
<name>HBB1_XENTR</name>
<organism>
    <name type="scientific">Xenopus tropicalis</name>
    <name type="common">Western clawed frog</name>
    <name type="synonym">Silurana tropicalis</name>
    <dbReference type="NCBI Taxonomy" id="8364"/>
    <lineage>
        <taxon>Eukaryota</taxon>
        <taxon>Metazoa</taxon>
        <taxon>Chordata</taxon>
        <taxon>Craniata</taxon>
        <taxon>Vertebrata</taxon>
        <taxon>Euteleostomi</taxon>
        <taxon>Amphibia</taxon>
        <taxon>Batrachia</taxon>
        <taxon>Anura</taxon>
        <taxon>Pipoidea</taxon>
        <taxon>Pipidae</taxon>
        <taxon>Xenopodinae</taxon>
        <taxon>Xenopus</taxon>
        <taxon>Silurana</taxon>
    </lineage>
</organism>
<gene>
    <name type="primary">hbb1</name>
</gene>
<sequence length="147" mass="16483">MVNLTAKERQLITGTWSKICAKTLGKQALGSMLYTYPWTQRYFSSFGNLSSIEAIFHNAAVATHGEKVLTSIGEAIKHMDDIKGYYAQLSKYHSETLHVDPYNFKRFCSCTIISMAQTLQEDFTPELQAAFEKLFAAIADALGKGYH</sequence>